<sequence>MSDSQENKPVETPTEVKPVAEKKPAAEKKEKKPAVKKVGVMETLQTPDYVKERIEIWESLKAKHLESLKDMKEEPINVTLPDGKVVAGIKNKTTPYDIAKGISRGLADSIVSSKVNGEQIWDISRPLEADCNLQLCKFDSEEGKKTFWHSSAHILGQAMERIYGGQLCIGPATSEGFYYDMAMGDKIVSAEDYKLINEVAQKIVQEKQPFERLAVPRDIALTMFKFNKYKTEIISKIPQEDTVSLYRCGTLVDLCRGPHVPNTSYIKSFAVTKNSSAYWLGKAENDDLQRVYGISFPDKKQMEEYENFMREAALRDHRNVGKAQELFFFHPYSPGSAFFLPHGTRIYNKLVEFIREEYHRRGFTEVISPSIFSQKLWEQSGHWQKYSENMFVLPVDKDNFSLKPMNCPGHCLMFGSRQRSYRELPLRFADFGVLHRNELAGALTGLTRVRKFQQDDAHIFCTTEMIEDEINSCLGFMQYVYGIFGFEFGLELSTRPDNFLGEIAQWDIAEASLEKALNKFGKPWKLNPKDGAFYGPKIDIHITDCLKRSHQCATIQLDFQLPIRFDLEYQSDDAAELKKRPVIIHRAILGSVERMMAILIEHTGGKWPLWVSPRQAIVVTVNKTHNEYGQKVCKEISDAGFYCDIDDSDKTISKKVREAQLAQYNYILVVGQEEINGNTVNVRTRDNVVRGSLTVNDLISEFKQLVKEFK</sequence>
<keyword id="KW-0030">Aminoacyl-tRNA synthetase</keyword>
<keyword id="KW-0067">ATP-binding</keyword>
<keyword id="KW-0963">Cytoplasm</keyword>
<keyword id="KW-0436">Ligase</keyword>
<keyword id="KW-0547">Nucleotide-binding</keyword>
<keyword id="KW-0648">Protein biosynthesis</keyword>
<keyword id="KW-1185">Reference proteome</keyword>
<feature type="chain" id="PRO_0000333831" description="Probable threonine--tRNA ligase 1, cytoplasmic">
    <location>
        <begin position="1"/>
        <end position="710"/>
    </location>
</feature>
<feature type="domain" description="TGS" evidence="2">
    <location>
        <begin position="72"/>
        <end position="137"/>
    </location>
</feature>
<feature type="region of interest" description="Disordered" evidence="3">
    <location>
        <begin position="1"/>
        <end position="35"/>
    </location>
</feature>
<feature type="compositionally biased region" description="Basic and acidic residues" evidence="3">
    <location>
        <begin position="18"/>
        <end position="33"/>
    </location>
</feature>
<organism>
    <name type="scientific">Dictyostelium discoideum</name>
    <name type="common">Social amoeba</name>
    <dbReference type="NCBI Taxonomy" id="44689"/>
    <lineage>
        <taxon>Eukaryota</taxon>
        <taxon>Amoebozoa</taxon>
        <taxon>Evosea</taxon>
        <taxon>Eumycetozoa</taxon>
        <taxon>Dictyostelia</taxon>
        <taxon>Dictyosteliales</taxon>
        <taxon>Dictyosteliaceae</taxon>
        <taxon>Dictyostelium</taxon>
    </lineage>
</organism>
<name>SYTC1_DICDI</name>
<dbReference type="EC" id="6.1.1.3"/>
<dbReference type="EMBL" id="AAFI02000109">
    <property type="protein sequence ID" value="EAL63315.1"/>
    <property type="molecule type" value="Genomic_DNA"/>
</dbReference>
<dbReference type="RefSeq" id="XP_636821.1">
    <property type="nucleotide sequence ID" value="XM_631729.1"/>
</dbReference>
<dbReference type="SMR" id="Q54J66"/>
<dbReference type="FunCoup" id="Q54J66">
    <property type="interactions" value="799"/>
</dbReference>
<dbReference type="STRING" id="44689.Q54J66"/>
<dbReference type="PaxDb" id="44689-DDB0231248"/>
<dbReference type="EnsemblProtists" id="EAL63315">
    <property type="protein sequence ID" value="EAL63315"/>
    <property type="gene ID" value="DDB_G0288267"/>
</dbReference>
<dbReference type="GeneID" id="8626539"/>
<dbReference type="KEGG" id="ddi:DDB_G0288267"/>
<dbReference type="dictyBase" id="DDB_G0288267">
    <property type="gene designation" value="thrS1"/>
</dbReference>
<dbReference type="VEuPathDB" id="AmoebaDB:DDB_G0288267"/>
<dbReference type="eggNOG" id="KOG1637">
    <property type="taxonomic scope" value="Eukaryota"/>
</dbReference>
<dbReference type="HOGENOM" id="CLU_008554_0_1_1"/>
<dbReference type="InParanoid" id="Q54J66"/>
<dbReference type="OMA" id="WYADGMY"/>
<dbReference type="PhylomeDB" id="Q54J66"/>
<dbReference type="PRO" id="PR:Q54J66"/>
<dbReference type="Proteomes" id="UP000002195">
    <property type="component" value="Chromosome 5"/>
</dbReference>
<dbReference type="GO" id="GO:0005737">
    <property type="term" value="C:cytoplasm"/>
    <property type="evidence" value="ECO:0000250"/>
    <property type="project" value="dictyBase"/>
</dbReference>
<dbReference type="GO" id="GO:0005739">
    <property type="term" value="C:mitochondrion"/>
    <property type="evidence" value="ECO:0000318"/>
    <property type="project" value="GO_Central"/>
</dbReference>
<dbReference type="GO" id="GO:0045335">
    <property type="term" value="C:phagocytic vesicle"/>
    <property type="evidence" value="ECO:0007005"/>
    <property type="project" value="dictyBase"/>
</dbReference>
<dbReference type="GO" id="GO:0005524">
    <property type="term" value="F:ATP binding"/>
    <property type="evidence" value="ECO:0007669"/>
    <property type="project" value="UniProtKB-KW"/>
</dbReference>
<dbReference type="GO" id="GO:0004829">
    <property type="term" value="F:threonine-tRNA ligase activity"/>
    <property type="evidence" value="ECO:0000250"/>
    <property type="project" value="dictyBase"/>
</dbReference>
<dbReference type="GO" id="GO:0006435">
    <property type="term" value="P:threonyl-tRNA aminoacylation"/>
    <property type="evidence" value="ECO:0000318"/>
    <property type="project" value="GO_Central"/>
</dbReference>
<dbReference type="CDD" id="cd01667">
    <property type="entry name" value="TGS_ThrRS"/>
    <property type="match status" value="1"/>
</dbReference>
<dbReference type="CDD" id="cd00860">
    <property type="entry name" value="ThrRS_anticodon"/>
    <property type="match status" value="1"/>
</dbReference>
<dbReference type="CDD" id="cd00771">
    <property type="entry name" value="ThrRS_core"/>
    <property type="match status" value="1"/>
</dbReference>
<dbReference type="FunFam" id="3.30.930.10:FF:000009">
    <property type="entry name" value="Threonine--tRNA ligase 2, cytoplasmic"/>
    <property type="match status" value="1"/>
</dbReference>
<dbReference type="FunFam" id="3.40.50.800:FF:000019">
    <property type="entry name" value="Threonine--tRNA ligase mitochondrial 1"/>
    <property type="match status" value="1"/>
</dbReference>
<dbReference type="FunFam" id="3.10.20.30:FF:000006">
    <property type="entry name" value="Threonine--tRNA ligase, cytoplasmic"/>
    <property type="match status" value="1"/>
</dbReference>
<dbReference type="FunFam" id="3.30.980.10:FF:000005">
    <property type="entry name" value="Threonyl-tRNA synthetase, mitochondrial"/>
    <property type="match status" value="1"/>
</dbReference>
<dbReference type="Gene3D" id="3.10.20.30">
    <property type="match status" value="1"/>
</dbReference>
<dbReference type="Gene3D" id="3.40.50.800">
    <property type="entry name" value="Anticodon-binding domain"/>
    <property type="match status" value="1"/>
</dbReference>
<dbReference type="Gene3D" id="3.30.930.10">
    <property type="entry name" value="Bira Bifunctional Protein, Domain 2"/>
    <property type="match status" value="1"/>
</dbReference>
<dbReference type="Gene3D" id="3.30.980.10">
    <property type="entry name" value="Threonyl-trna Synthetase, Chain A, domain 2"/>
    <property type="match status" value="1"/>
</dbReference>
<dbReference type="HAMAP" id="MF_00184">
    <property type="entry name" value="Thr_tRNA_synth"/>
    <property type="match status" value="1"/>
</dbReference>
<dbReference type="InterPro" id="IPR002314">
    <property type="entry name" value="aa-tRNA-synt_IIb"/>
</dbReference>
<dbReference type="InterPro" id="IPR006195">
    <property type="entry name" value="aa-tRNA-synth_II"/>
</dbReference>
<dbReference type="InterPro" id="IPR045864">
    <property type="entry name" value="aa-tRNA-synth_II/BPL/LPL"/>
</dbReference>
<dbReference type="InterPro" id="IPR004154">
    <property type="entry name" value="Anticodon-bd"/>
</dbReference>
<dbReference type="InterPro" id="IPR036621">
    <property type="entry name" value="Anticodon-bd_dom_sf"/>
</dbReference>
<dbReference type="InterPro" id="IPR012675">
    <property type="entry name" value="Beta-grasp_dom_sf"/>
</dbReference>
<dbReference type="InterPro" id="IPR004095">
    <property type="entry name" value="TGS"/>
</dbReference>
<dbReference type="InterPro" id="IPR012676">
    <property type="entry name" value="TGS-like"/>
</dbReference>
<dbReference type="InterPro" id="IPR002320">
    <property type="entry name" value="Thr-tRNA-ligase_IIa"/>
</dbReference>
<dbReference type="InterPro" id="IPR018163">
    <property type="entry name" value="Thr/Ala-tRNA-synth_IIc_edit"/>
</dbReference>
<dbReference type="InterPro" id="IPR047246">
    <property type="entry name" value="ThrRS_anticodon"/>
</dbReference>
<dbReference type="InterPro" id="IPR033728">
    <property type="entry name" value="ThrRS_core"/>
</dbReference>
<dbReference type="InterPro" id="IPR012947">
    <property type="entry name" value="tRNA_SAD"/>
</dbReference>
<dbReference type="NCBIfam" id="TIGR00418">
    <property type="entry name" value="thrS"/>
    <property type="match status" value="1"/>
</dbReference>
<dbReference type="PANTHER" id="PTHR11451:SF46">
    <property type="entry name" value="THREONINE--TRNA LIGASE"/>
    <property type="match status" value="1"/>
</dbReference>
<dbReference type="PANTHER" id="PTHR11451">
    <property type="entry name" value="THREONINE-TRNA LIGASE"/>
    <property type="match status" value="1"/>
</dbReference>
<dbReference type="Pfam" id="PF03129">
    <property type="entry name" value="HGTP_anticodon"/>
    <property type="match status" value="1"/>
</dbReference>
<dbReference type="Pfam" id="PF02824">
    <property type="entry name" value="TGS"/>
    <property type="match status" value="1"/>
</dbReference>
<dbReference type="Pfam" id="PF00587">
    <property type="entry name" value="tRNA-synt_2b"/>
    <property type="match status" value="1"/>
</dbReference>
<dbReference type="Pfam" id="PF07973">
    <property type="entry name" value="tRNA_SAD"/>
    <property type="match status" value="1"/>
</dbReference>
<dbReference type="PRINTS" id="PR01047">
    <property type="entry name" value="TRNASYNTHTHR"/>
</dbReference>
<dbReference type="SMART" id="SM00863">
    <property type="entry name" value="tRNA_SAD"/>
    <property type="match status" value="1"/>
</dbReference>
<dbReference type="SUPFAM" id="SSF52954">
    <property type="entry name" value="Class II aaRS ABD-related"/>
    <property type="match status" value="1"/>
</dbReference>
<dbReference type="SUPFAM" id="SSF55681">
    <property type="entry name" value="Class II aaRS and biotin synthetases"/>
    <property type="match status" value="1"/>
</dbReference>
<dbReference type="SUPFAM" id="SSF81271">
    <property type="entry name" value="TGS-like"/>
    <property type="match status" value="1"/>
</dbReference>
<dbReference type="SUPFAM" id="SSF55186">
    <property type="entry name" value="ThrRS/AlaRS common domain"/>
    <property type="match status" value="1"/>
</dbReference>
<dbReference type="PROSITE" id="PS50862">
    <property type="entry name" value="AA_TRNA_LIGASE_II"/>
    <property type="match status" value="1"/>
</dbReference>
<dbReference type="PROSITE" id="PS51880">
    <property type="entry name" value="TGS"/>
    <property type="match status" value="1"/>
</dbReference>
<reference key="1">
    <citation type="journal article" date="2005" name="Nature">
        <title>The genome of the social amoeba Dictyostelium discoideum.</title>
        <authorList>
            <person name="Eichinger L."/>
            <person name="Pachebat J.A."/>
            <person name="Gloeckner G."/>
            <person name="Rajandream M.A."/>
            <person name="Sucgang R."/>
            <person name="Berriman M."/>
            <person name="Song J."/>
            <person name="Olsen R."/>
            <person name="Szafranski K."/>
            <person name="Xu Q."/>
            <person name="Tunggal B."/>
            <person name="Kummerfeld S."/>
            <person name="Madera M."/>
            <person name="Konfortov B.A."/>
            <person name="Rivero F."/>
            <person name="Bankier A.T."/>
            <person name="Lehmann R."/>
            <person name="Hamlin N."/>
            <person name="Davies R."/>
            <person name="Gaudet P."/>
            <person name="Fey P."/>
            <person name="Pilcher K."/>
            <person name="Chen G."/>
            <person name="Saunders D."/>
            <person name="Sodergren E.J."/>
            <person name="Davis P."/>
            <person name="Kerhornou A."/>
            <person name="Nie X."/>
            <person name="Hall N."/>
            <person name="Anjard C."/>
            <person name="Hemphill L."/>
            <person name="Bason N."/>
            <person name="Farbrother P."/>
            <person name="Desany B."/>
            <person name="Just E."/>
            <person name="Morio T."/>
            <person name="Rost R."/>
            <person name="Churcher C.M."/>
            <person name="Cooper J."/>
            <person name="Haydock S."/>
            <person name="van Driessche N."/>
            <person name="Cronin A."/>
            <person name="Goodhead I."/>
            <person name="Muzny D.M."/>
            <person name="Mourier T."/>
            <person name="Pain A."/>
            <person name="Lu M."/>
            <person name="Harper D."/>
            <person name="Lindsay R."/>
            <person name="Hauser H."/>
            <person name="James K.D."/>
            <person name="Quiles M."/>
            <person name="Madan Babu M."/>
            <person name="Saito T."/>
            <person name="Buchrieser C."/>
            <person name="Wardroper A."/>
            <person name="Felder M."/>
            <person name="Thangavelu M."/>
            <person name="Johnson D."/>
            <person name="Knights A."/>
            <person name="Loulseged H."/>
            <person name="Mungall K.L."/>
            <person name="Oliver K."/>
            <person name="Price C."/>
            <person name="Quail M.A."/>
            <person name="Urushihara H."/>
            <person name="Hernandez J."/>
            <person name="Rabbinowitsch E."/>
            <person name="Steffen D."/>
            <person name="Sanders M."/>
            <person name="Ma J."/>
            <person name="Kohara Y."/>
            <person name="Sharp S."/>
            <person name="Simmonds M.N."/>
            <person name="Spiegler S."/>
            <person name="Tivey A."/>
            <person name="Sugano S."/>
            <person name="White B."/>
            <person name="Walker D."/>
            <person name="Woodward J.R."/>
            <person name="Winckler T."/>
            <person name="Tanaka Y."/>
            <person name="Shaulsky G."/>
            <person name="Schleicher M."/>
            <person name="Weinstock G.M."/>
            <person name="Rosenthal A."/>
            <person name="Cox E.C."/>
            <person name="Chisholm R.L."/>
            <person name="Gibbs R.A."/>
            <person name="Loomis W.F."/>
            <person name="Platzer M."/>
            <person name="Kay R.R."/>
            <person name="Williams J.G."/>
            <person name="Dear P.H."/>
            <person name="Noegel A.A."/>
            <person name="Barrell B.G."/>
            <person name="Kuspa A."/>
        </authorList>
    </citation>
    <scope>NUCLEOTIDE SEQUENCE [LARGE SCALE GENOMIC DNA]</scope>
    <source>
        <strain>AX4</strain>
    </source>
</reference>
<gene>
    <name type="primary">thrS1</name>
    <name type="ORF">DDB_G0288267</name>
</gene>
<protein>
    <recommendedName>
        <fullName>Probable threonine--tRNA ligase 1, cytoplasmic</fullName>
        <ecNumber>6.1.1.3</ecNumber>
    </recommendedName>
    <alternativeName>
        <fullName>Threonyl-tRNA synthetase</fullName>
        <shortName>ThrRS</shortName>
    </alternativeName>
</protein>
<evidence type="ECO:0000250" key="1"/>
<evidence type="ECO:0000255" key="2">
    <source>
        <dbReference type="PROSITE-ProRule" id="PRU01228"/>
    </source>
</evidence>
<evidence type="ECO:0000256" key="3">
    <source>
        <dbReference type="SAM" id="MobiDB-lite"/>
    </source>
</evidence>
<evidence type="ECO:0000305" key="4"/>
<proteinExistence type="inferred from homology"/>
<accession>Q54J66</accession>
<comment type="catalytic activity">
    <reaction>
        <text>tRNA(Thr) + L-threonine + ATP = L-threonyl-tRNA(Thr) + AMP + diphosphate + H(+)</text>
        <dbReference type="Rhea" id="RHEA:24624"/>
        <dbReference type="Rhea" id="RHEA-COMP:9670"/>
        <dbReference type="Rhea" id="RHEA-COMP:9704"/>
        <dbReference type="ChEBI" id="CHEBI:15378"/>
        <dbReference type="ChEBI" id="CHEBI:30616"/>
        <dbReference type="ChEBI" id="CHEBI:33019"/>
        <dbReference type="ChEBI" id="CHEBI:57926"/>
        <dbReference type="ChEBI" id="CHEBI:78442"/>
        <dbReference type="ChEBI" id="CHEBI:78534"/>
        <dbReference type="ChEBI" id="CHEBI:456215"/>
        <dbReference type="EC" id="6.1.1.3"/>
    </reaction>
</comment>
<comment type="subcellular location">
    <subcellularLocation>
        <location evidence="1">Cytoplasm</location>
    </subcellularLocation>
</comment>
<comment type="similarity">
    <text evidence="4">Belongs to the class-II aminoacyl-tRNA synthetase family.</text>
</comment>